<dbReference type="EC" id="7.1.1.9"/>
<dbReference type="EMBL" id="DQ019313">
    <property type="protein sequence ID" value="AAY26162.1"/>
    <property type="molecule type" value="Genomic_DNA"/>
</dbReference>
<dbReference type="SMR" id="Q4JQI1"/>
<dbReference type="FunCoup" id="Q4JQI1">
    <property type="interactions" value="14"/>
</dbReference>
<dbReference type="STRING" id="99883.ENSTNIP00000023047"/>
<dbReference type="Ensembl" id="ENSTNIT00000023289.1">
    <property type="protein sequence ID" value="ENSTNIP00000023047.1"/>
    <property type="gene ID" value="ENSTNIG00000019783.1"/>
</dbReference>
<dbReference type="GeneTree" id="ENSGT00390000013064"/>
<dbReference type="HOGENOM" id="CLU_044071_0_0_1"/>
<dbReference type="InParanoid" id="Q4JQI1"/>
<dbReference type="OMA" id="SIYWWGS"/>
<dbReference type="TreeFam" id="TF343435"/>
<dbReference type="Proteomes" id="UP000007303">
    <property type="component" value="Mitochondrion"/>
</dbReference>
<dbReference type="GO" id="GO:0005743">
    <property type="term" value="C:mitochondrial inner membrane"/>
    <property type="evidence" value="ECO:0007669"/>
    <property type="project" value="UniProtKB-SubCell"/>
</dbReference>
<dbReference type="GO" id="GO:0045277">
    <property type="term" value="C:respiratory chain complex IV"/>
    <property type="evidence" value="ECO:0000250"/>
    <property type="project" value="UniProtKB"/>
</dbReference>
<dbReference type="GO" id="GO:0004129">
    <property type="term" value="F:cytochrome-c oxidase activity"/>
    <property type="evidence" value="ECO:0007669"/>
    <property type="project" value="UniProtKB-EC"/>
</dbReference>
<dbReference type="GO" id="GO:0006123">
    <property type="term" value="P:mitochondrial electron transport, cytochrome c to oxygen"/>
    <property type="evidence" value="ECO:0007669"/>
    <property type="project" value="TreeGrafter"/>
</dbReference>
<dbReference type="CDD" id="cd01665">
    <property type="entry name" value="Cyt_c_Oxidase_III"/>
    <property type="match status" value="1"/>
</dbReference>
<dbReference type="FunFam" id="1.10.287.70:FF:000048">
    <property type="entry name" value="Cytochrome c oxidase subunit 3"/>
    <property type="match status" value="1"/>
</dbReference>
<dbReference type="FunFam" id="1.20.120.80:FF:000002">
    <property type="entry name" value="Cytochrome c oxidase subunit 3"/>
    <property type="match status" value="1"/>
</dbReference>
<dbReference type="Gene3D" id="1.10.287.70">
    <property type="match status" value="1"/>
</dbReference>
<dbReference type="Gene3D" id="1.20.120.80">
    <property type="entry name" value="Cytochrome c oxidase, subunit III, four-helix bundle"/>
    <property type="match status" value="1"/>
</dbReference>
<dbReference type="InterPro" id="IPR024791">
    <property type="entry name" value="Cyt_c/ubiquinol_Oxase_su3"/>
</dbReference>
<dbReference type="InterPro" id="IPR033945">
    <property type="entry name" value="Cyt_c_oxase_su3_dom"/>
</dbReference>
<dbReference type="InterPro" id="IPR000298">
    <property type="entry name" value="Cyt_c_oxidase-like_su3"/>
</dbReference>
<dbReference type="InterPro" id="IPR035973">
    <property type="entry name" value="Cyt_c_oxidase_su3-like_sf"/>
</dbReference>
<dbReference type="InterPro" id="IPR013833">
    <property type="entry name" value="Cyt_c_oxidase_su3_a-hlx"/>
</dbReference>
<dbReference type="PANTHER" id="PTHR11403:SF7">
    <property type="entry name" value="CYTOCHROME C OXIDASE SUBUNIT 3"/>
    <property type="match status" value="1"/>
</dbReference>
<dbReference type="PANTHER" id="PTHR11403">
    <property type="entry name" value="CYTOCHROME C OXIDASE SUBUNIT III"/>
    <property type="match status" value="1"/>
</dbReference>
<dbReference type="Pfam" id="PF00510">
    <property type="entry name" value="COX3"/>
    <property type="match status" value="1"/>
</dbReference>
<dbReference type="SUPFAM" id="SSF81452">
    <property type="entry name" value="Cytochrome c oxidase subunit III-like"/>
    <property type="match status" value="1"/>
</dbReference>
<dbReference type="PROSITE" id="PS50253">
    <property type="entry name" value="COX3"/>
    <property type="match status" value="1"/>
</dbReference>
<comment type="function">
    <text evidence="2">Component of the cytochrome c oxidase, the last enzyme in the mitochondrial electron transport chain which drives oxidative phosphorylation. The respiratory chain contains 3 multisubunit complexes succinate dehydrogenase (complex II, CII), ubiquinol-cytochrome c oxidoreductase (cytochrome b-c1 complex, complex III, CIII) and cytochrome c oxidase (complex IV, CIV), that cooperate to transfer electrons derived from NADH and succinate to molecular oxygen, creating an electrochemical gradient over the inner membrane that drives transmembrane transport and the ATP synthase. Cytochrome c oxidase is the component of the respiratory chain that catalyzes the reduction of oxygen to water. Electrons originating from reduced cytochrome c in the intermembrane space (IMS) are transferred via the dinuclear copper A center (CU(A)) of subunit 2 and heme A of subunit 1 to the active site in subunit 1, a binuclear center (BNC) formed by heme A3 and copper B (CU(B)). The BNC reduces molecular oxygen to 2 water molecules using 4 electrons from cytochrome c in the IMS and 4 protons from the mitochondrial matrix.</text>
</comment>
<comment type="catalytic activity">
    <reaction evidence="2">
        <text>4 Fe(II)-[cytochrome c] + O2 + 8 H(+)(in) = 4 Fe(III)-[cytochrome c] + 2 H2O + 4 H(+)(out)</text>
        <dbReference type="Rhea" id="RHEA:11436"/>
        <dbReference type="Rhea" id="RHEA-COMP:10350"/>
        <dbReference type="Rhea" id="RHEA-COMP:14399"/>
        <dbReference type="ChEBI" id="CHEBI:15377"/>
        <dbReference type="ChEBI" id="CHEBI:15378"/>
        <dbReference type="ChEBI" id="CHEBI:15379"/>
        <dbReference type="ChEBI" id="CHEBI:29033"/>
        <dbReference type="ChEBI" id="CHEBI:29034"/>
        <dbReference type="EC" id="7.1.1.9"/>
    </reaction>
    <physiologicalReaction direction="left-to-right" evidence="2">
        <dbReference type="Rhea" id="RHEA:11437"/>
    </physiologicalReaction>
</comment>
<comment type="subunit">
    <text evidence="1">Component of the cytochrome c oxidase (complex IV, CIV), a multisubunit enzyme composed of 14 subunits. The complex is composed of a catalytic core of 3 subunits MT-CO1, MT-CO2 and MT-CO3, encoded in the mitochondrial DNA, and 11 supernumerary subunits COX4I, COX5A, COX5B, COX6A, COX6B, COX6C, COX7A, COX7B, COX7C, COX8 and NDUFA4, which are encoded in the nuclear genome. The complex exists as a monomer or a dimer and forms supercomplexes (SCs) in the inner mitochondrial membrane with NADH-ubiquinone oxidoreductase (complex I, CI) and ubiquinol-cytochrome c oxidoreductase (cytochrome b-c1 complex, complex III, CIII), resulting in different assemblies (supercomplex SCI(1)III(2)IV(1) and megacomplex MCI(2)III(2)IV(2)).</text>
</comment>
<comment type="subcellular location">
    <subcellularLocation>
        <location evidence="1">Mitochondrion inner membrane</location>
        <topology evidence="1">Multi-pass membrane protein</topology>
    </subcellularLocation>
</comment>
<comment type="similarity">
    <text evidence="3">Belongs to the cytochrome c oxidase subunit 3 family.</text>
</comment>
<evidence type="ECO:0000250" key="1">
    <source>
        <dbReference type="UniProtKB" id="P00415"/>
    </source>
</evidence>
<evidence type="ECO:0000250" key="2">
    <source>
        <dbReference type="UniProtKB" id="P00420"/>
    </source>
</evidence>
<evidence type="ECO:0000305" key="3"/>
<accession>Q4JQI1</accession>
<geneLocation type="mitochondrion"/>
<name>COX3_TETNG</name>
<keyword id="KW-0472">Membrane</keyword>
<keyword id="KW-0496">Mitochondrion</keyword>
<keyword id="KW-0999">Mitochondrion inner membrane</keyword>
<keyword id="KW-1185">Reference proteome</keyword>
<keyword id="KW-1278">Translocase</keyword>
<keyword id="KW-0812">Transmembrane</keyword>
<keyword id="KW-1133">Transmembrane helix</keyword>
<gene>
    <name type="primary">mt-co3</name>
    <name type="synonym">coiii</name>
    <name type="synonym">coxiii</name>
    <name type="synonym">mtco3</name>
</gene>
<sequence length="261" mass="29726">MAHQAHAYHMVDPSPWPLTGAVAALLLTSGLAIWFPFNSLILLTLGLVLLLLTMYQWWRDIVREGTFQGHHTPPVQKGLRYGMILFITSEVFFFLGFFWAFYHSSLAPTPELGGCWPPTGIVPLNPFEVPLLNTAVLLASGVTVTWAHHSIMEGERKQAIHSLTLTILLGFYFTFLQAMEYYEAPFTIADGVYGSTFFVATGFHGLHVIIGSTFLAICLLRQIRYHFTSEHHFGFEAAAWYWHFVDVVWLFLYISIYWWGS</sequence>
<reference key="1">
    <citation type="journal article" date="2006" name="DNA Seq.">
        <title>The complete nucleotide sequence of the mitochondrial genome of Tetraodon nigroviridis.</title>
        <authorList>
            <person name="Yue G.H."/>
            <person name="Lo L.C."/>
            <person name="Zhu Z.Y."/>
            <person name="Lin G."/>
            <person name="Feng F."/>
        </authorList>
    </citation>
    <scope>NUCLEOTIDE SEQUENCE [LARGE SCALE GENOMIC DNA]</scope>
</reference>
<protein>
    <recommendedName>
        <fullName>Cytochrome c oxidase subunit 3</fullName>
        <ecNumber>7.1.1.9</ecNumber>
    </recommendedName>
    <alternativeName>
        <fullName>Cytochrome c oxidase polypeptide III</fullName>
    </alternativeName>
</protein>
<organism>
    <name type="scientific">Tetraodon nigroviridis</name>
    <name type="common">Spotted green pufferfish</name>
    <name type="synonym">Chelonodon nigroviridis</name>
    <dbReference type="NCBI Taxonomy" id="99883"/>
    <lineage>
        <taxon>Eukaryota</taxon>
        <taxon>Metazoa</taxon>
        <taxon>Chordata</taxon>
        <taxon>Craniata</taxon>
        <taxon>Vertebrata</taxon>
        <taxon>Euteleostomi</taxon>
        <taxon>Actinopterygii</taxon>
        <taxon>Neopterygii</taxon>
        <taxon>Teleostei</taxon>
        <taxon>Neoteleostei</taxon>
        <taxon>Acanthomorphata</taxon>
        <taxon>Eupercaria</taxon>
        <taxon>Tetraodontiformes</taxon>
        <taxon>Tetradontoidea</taxon>
        <taxon>Tetraodontidae</taxon>
        <taxon>Tetraodon</taxon>
    </lineage>
</organism>
<proteinExistence type="inferred from homology"/>
<feature type="chain" id="PRO_0000183861" description="Cytochrome c oxidase subunit 3">
    <location>
        <begin position="1"/>
        <end position="261"/>
    </location>
</feature>
<feature type="topological domain" description="Mitochondrial matrix" evidence="1">
    <location>
        <begin position="1"/>
        <end position="15"/>
    </location>
</feature>
<feature type="transmembrane region" description="Helical; Name=I" evidence="1">
    <location>
        <begin position="16"/>
        <end position="34"/>
    </location>
</feature>
<feature type="topological domain" description="Mitochondrial intermembrane" evidence="1">
    <location>
        <begin position="35"/>
        <end position="40"/>
    </location>
</feature>
<feature type="transmembrane region" description="Helical; Name=II" evidence="1">
    <location>
        <begin position="41"/>
        <end position="66"/>
    </location>
</feature>
<feature type="topological domain" description="Mitochondrial matrix" evidence="1">
    <location>
        <begin position="67"/>
        <end position="72"/>
    </location>
</feature>
<feature type="transmembrane region" description="Helical; Name=III" evidence="1">
    <location>
        <begin position="73"/>
        <end position="105"/>
    </location>
</feature>
<feature type="topological domain" description="Mitochondrial intermembrane" evidence="1">
    <location>
        <begin position="106"/>
        <end position="128"/>
    </location>
</feature>
<feature type="transmembrane region" description="Helical; Name=IV" evidence="1">
    <location>
        <begin position="129"/>
        <end position="152"/>
    </location>
</feature>
<feature type="topological domain" description="Mitochondrial matrix" evidence="1">
    <location>
        <begin position="153"/>
        <end position="155"/>
    </location>
</feature>
<feature type="transmembrane region" description="Helical; Name=V" evidence="1">
    <location>
        <begin position="156"/>
        <end position="183"/>
    </location>
</feature>
<feature type="topological domain" description="Mitochondrial intermembrane" evidence="1">
    <location>
        <begin position="184"/>
        <end position="190"/>
    </location>
</feature>
<feature type="transmembrane region" description="Helical; Name=VI" evidence="1">
    <location>
        <begin position="191"/>
        <end position="223"/>
    </location>
</feature>
<feature type="topological domain" description="Mitochondrial matrix" evidence="1">
    <location>
        <begin position="224"/>
        <end position="232"/>
    </location>
</feature>
<feature type="transmembrane region" description="Helical; Name=VII" evidence="1">
    <location>
        <begin position="233"/>
        <end position="256"/>
    </location>
</feature>
<feature type="topological domain" description="Mitochondrial intermembrane" evidence="1">
    <location>
        <begin position="257"/>
        <end position="261"/>
    </location>
</feature>